<organism>
    <name type="scientific">Streptomyces griseus</name>
    <dbReference type="NCBI Taxonomy" id="1911"/>
    <lineage>
        <taxon>Bacteria</taxon>
        <taxon>Bacillati</taxon>
        <taxon>Actinomycetota</taxon>
        <taxon>Actinomycetes</taxon>
        <taxon>Kitasatosporales</taxon>
        <taxon>Streptomycetaceae</taxon>
        <taxon>Streptomyces</taxon>
    </lineage>
</organism>
<comment type="function">
    <text evidence="1">Involved in the biosynthesis of the antibiotic indolmycin, an inhibitor of the bacterial tryptophan-tRNA synthetases. Catalyzes the methylation of N-demethylindolmycin to yield indolmycin, with S-adenosylmethionine (AdoMet) acting as the methyl donor.</text>
</comment>
<comment type="catalytic activity">
    <reaction evidence="1">
        <text>N-demethylindolmycin + S-adenosyl-L-methionine = indolmycin + S-adenosyl-L-homocysteine + H(+)</text>
        <dbReference type="Rhea" id="RHEA:24726"/>
        <dbReference type="ChEBI" id="CHEBI:15378"/>
        <dbReference type="ChEBI" id="CHEBI:57856"/>
        <dbReference type="ChEBI" id="CHEBI:59789"/>
        <dbReference type="ChEBI" id="CHEBI:91178"/>
        <dbReference type="ChEBI" id="CHEBI:91179"/>
        <dbReference type="EC" id="2.1.1.328"/>
    </reaction>
</comment>
<comment type="disruption phenotype">
    <text evidence="1">Cells lacking this gene accumulate N-demethylindolmycin and are unable to produce indolmycin.</text>
</comment>
<comment type="similarity">
    <text evidence="3">Belongs to the methyltransferase superfamily.</text>
</comment>
<proteinExistence type="evidence at protein level"/>
<evidence type="ECO:0000269" key="1">
    <source>
    </source>
</evidence>
<evidence type="ECO:0000303" key="2">
    <source>
    </source>
</evidence>
<evidence type="ECO:0000305" key="3"/>
<evidence type="ECO:0000312" key="4">
    <source>
        <dbReference type="EMBL" id="AJT38688.1"/>
    </source>
</evidence>
<accession>A0A0D4BSP3</accession>
<name>IND7_STRGR</name>
<reference key="1">
    <citation type="journal article" date="2015" name="Proc. Natl. Acad. Sci. U.S.A.">
        <title>In vitro reconstitution of indolmycin biosynthesis reveals the molecular basis of oxazolinone assembly.</title>
        <authorList>
            <person name="Du Y.L."/>
            <person name="Alkhalaf L.M."/>
            <person name="Ryan K.S."/>
        </authorList>
    </citation>
    <scope>NUCLEOTIDE SEQUENCE [GENOMIC DNA]</scope>
    <scope>FUNCTION</scope>
    <scope>CATALYTIC ACTIVITY</scope>
    <scope>DISRUPTION PHENOTYPE</scope>
    <source>
        <strain evidence="4">ATCC 12648</strain>
    </source>
</reference>
<gene>
    <name evidence="2" type="primary">ind7</name>
</gene>
<protein>
    <recommendedName>
        <fullName evidence="2">N-demethylindolmycin N-methyltransferase</fullName>
        <ecNumber evidence="1">2.1.1.328</ecNumber>
    </recommendedName>
</protein>
<feature type="chain" id="PRO_0000442338" description="N-demethylindolmycin N-methyltransferase">
    <location>
        <begin position="1"/>
        <end position="237"/>
    </location>
</feature>
<sequence>MHTDWETSESAEDYSRNTAAAQWEPMGYPAVFRSLALATTDSDNAPPILDYGCGPGFVDRHVAEKYGRRVIAVDISSSMIDLARSQHSHPLVTYRHVPDSQLDFLGDKEIGGCMSCFVLMQMADSDTQVEICRRIRRTLAPGAMLAVLNTHPDSVGIQFATLRNGEPDRVYQPGDPMTTVLTTDKGVLRLQDYYWRVTDYVHALEAAGFHEVTVEHLPPPPADPTPHPQFLLVRGTA</sequence>
<keyword id="KW-0045">Antibiotic biosynthesis</keyword>
<keyword id="KW-0489">Methyltransferase</keyword>
<keyword id="KW-0949">S-adenosyl-L-methionine</keyword>
<keyword id="KW-0808">Transferase</keyword>
<dbReference type="EC" id="2.1.1.328" evidence="1"/>
<dbReference type="EMBL" id="KM596502">
    <property type="protein sequence ID" value="AJT38688.1"/>
    <property type="molecule type" value="Genomic_DNA"/>
</dbReference>
<dbReference type="SMR" id="A0A0D4BSP3"/>
<dbReference type="KEGG" id="ag:AJT38688"/>
<dbReference type="BioCyc" id="MetaCyc:MONOMER-19776"/>
<dbReference type="BRENDA" id="2.1.1.328">
    <property type="organism ID" value="12251"/>
</dbReference>
<dbReference type="GO" id="GO:0008168">
    <property type="term" value="F:methyltransferase activity"/>
    <property type="evidence" value="ECO:0007669"/>
    <property type="project" value="UniProtKB-KW"/>
</dbReference>
<dbReference type="GO" id="GO:0017000">
    <property type="term" value="P:antibiotic biosynthetic process"/>
    <property type="evidence" value="ECO:0007669"/>
    <property type="project" value="UniProtKB-KW"/>
</dbReference>
<dbReference type="GO" id="GO:0032259">
    <property type="term" value="P:methylation"/>
    <property type="evidence" value="ECO:0007669"/>
    <property type="project" value="UniProtKB-KW"/>
</dbReference>
<dbReference type="CDD" id="cd02440">
    <property type="entry name" value="AdoMet_MTases"/>
    <property type="match status" value="1"/>
</dbReference>
<dbReference type="Gene3D" id="3.40.50.150">
    <property type="entry name" value="Vaccinia Virus protein VP39"/>
    <property type="match status" value="1"/>
</dbReference>
<dbReference type="InterPro" id="IPR041698">
    <property type="entry name" value="Methyltransf_25"/>
</dbReference>
<dbReference type="InterPro" id="IPR029063">
    <property type="entry name" value="SAM-dependent_MTases_sf"/>
</dbReference>
<dbReference type="PANTHER" id="PTHR43861:SF1">
    <property type="entry name" value="TRANS-ACONITATE 2-METHYLTRANSFERASE"/>
    <property type="match status" value="1"/>
</dbReference>
<dbReference type="PANTHER" id="PTHR43861">
    <property type="entry name" value="TRANS-ACONITATE 2-METHYLTRANSFERASE-RELATED"/>
    <property type="match status" value="1"/>
</dbReference>
<dbReference type="Pfam" id="PF13649">
    <property type="entry name" value="Methyltransf_25"/>
    <property type="match status" value="1"/>
</dbReference>
<dbReference type="SUPFAM" id="SSF53335">
    <property type="entry name" value="S-adenosyl-L-methionine-dependent methyltransferases"/>
    <property type="match status" value="1"/>
</dbReference>